<comment type="subcellular location">
    <subcellularLocation>
        <location evidence="2">Cytoplasm</location>
    </subcellularLocation>
</comment>
<comment type="miscellaneous">
    <text evidence="3">Present with 6400 molecules/cell in log phase SD medium.</text>
</comment>
<comment type="similarity">
    <text evidence="4">Belongs to the class-I pyridine nucleotide-disulfide oxidoreductase family.</text>
</comment>
<comment type="caution">
    <text evidence="4">Although strongly related to the LPD1 dihydrolipoyl dehydrogenase, it lacks the redox-active disulfide bond suggesting that it has no dehydrogenase activity.</text>
</comment>
<evidence type="ECO:0000250" key="1"/>
<evidence type="ECO:0000269" key="2">
    <source>
    </source>
</evidence>
<evidence type="ECO:0000269" key="3">
    <source>
    </source>
</evidence>
<evidence type="ECO:0000305" key="4"/>
<dbReference type="EMBL" id="U36624">
    <property type="protein sequence ID" value="AAB68170.1"/>
    <property type="molecule type" value="Genomic_DNA"/>
</dbReference>
<dbReference type="EMBL" id="BK006949">
    <property type="protein sequence ID" value="DAA11411.1"/>
    <property type="molecule type" value="Genomic_DNA"/>
</dbReference>
<dbReference type="PIR" id="S63465">
    <property type="entry name" value="S63465"/>
</dbReference>
<dbReference type="RefSeq" id="NP_015308.1">
    <property type="nucleotide sequence ID" value="NM_001183831.1"/>
</dbReference>
<dbReference type="SMR" id="Q02733"/>
<dbReference type="BioGRID" id="36160">
    <property type="interactions" value="140"/>
</dbReference>
<dbReference type="FunCoup" id="Q02733">
    <property type="interactions" value="97"/>
</dbReference>
<dbReference type="IntAct" id="Q02733">
    <property type="interactions" value="3"/>
</dbReference>
<dbReference type="STRING" id="4932.YPL017C"/>
<dbReference type="PaxDb" id="4932-YPL017C"/>
<dbReference type="PeptideAtlas" id="Q02733"/>
<dbReference type="EnsemblFungi" id="YPL017C_mRNA">
    <property type="protein sequence ID" value="YPL017C"/>
    <property type="gene ID" value="YPL017C"/>
</dbReference>
<dbReference type="GeneID" id="856090"/>
<dbReference type="KEGG" id="sce:YPL017C"/>
<dbReference type="AGR" id="SGD:S000005938"/>
<dbReference type="SGD" id="S000005938">
    <property type="gene designation" value="IRC15"/>
</dbReference>
<dbReference type="VEuPathDB" id="FungiDB:YPL017C"/>
<dbReference type="eggNOG" id="KOG1335">
    <property type="taxonomic scope" value="Eukaryota"/>
</dbReference>
<dbReference type="GeneTree" id="ENSGT00550000074844"/>
<dbReference type="HOGENOM" id="CLU_016755_1_2_1"/>
<dbReference type="InParanoid" id="Q02733"/>
<dbReference type="OMA" id="PVDIQMR"/>
<dbReference type="OrthoDB" id="361797at2759"/>
<dbReference type="BioCyc" id="YEAST:G3O-33936-MONOMER"/>
<dbReference type="BioGRID-ORCS" id="856090">
    <property type="hits" value="0 hits in 10 CRISPR screens"/>
</dbReference>
<dbReference type="PRO" id="PR:Q02733"/>
<dbReference type="Proteomes" id="UP000002311">
    <property type="component" value="Chromosome XVI"/>
</dbReference>
<dbReference type="RNAct" id="Q02733">
    <property type="molecule type" value="protein"/>
</dbReference>
<dbReference type="GO" id="GO:0005737">
    <property type="term" value="C:cytoplasm"/>
    <property type="evidence" value="ECO:0007005"/>
    <property type="project" value="SGD"/>
</dbReference>
<dbReference type="GO" id="GO:0005874">
    <property type="term" value="C:microtubule"/>
    <property type="evidence" value="ECO:0000314"/>
    <property type="project" value="SGD"/>
</dbReference>
<dbReference type="GO" id="GO:0005739">
    <property type="term" value="C:mitochondrion"/>
    <property type="evidence" value="ECO:0000318"/>
    <property type="project" value="GO_Central"/>
</dbReference>
<dbReference type="GO" id="GO:0045252">
    <property type="term" value="C:oxoglutarate dehydrogenase complex"/>
    <property type="evidence" value="ECO:0000318"/>
    <property type="project" value="GO_Central"/>
</dbReference>
<dbReference type="GO" id="GO:0004148">
    <property type="term" value="F:dihydrolipoyl dehydrogenase (NADH) activity"/>
    <property type="evidence" value="ECO:0000318"/>
    <property type="project" value="GO_Central"/>
</dbReference>
<dbReference type="GO" id="GO:0050660">
    <property type="term" value="F:flavin adenine dinucleotide binding"/>
    <property type="evidence" value="ECO:0000318"/>
    <property type="project" value="GO_Central"/>
</dbReference>
<dbReference type="GO" id="GO:0008017">
    <property type="term" value="F:microtubule binding"/>
    <property type="evidence" value="ECO:0000314"/>
    <property type="project" value="SGD"/>
</dbReference>
<dbReference type="GO" id="GO:0016651">
    <property type="term" value="F:oxidoreductase activity, acting on NAD(P)H"/>
    <property type="evidence" value="ECO:0000314"/>
    <property type="project" value="SGD"/>
</dbReference>
<dbReference type="GO" id="GO:0006103">
    <property type="term" value="P:2-oxoglutarate metabolic process"/>
    <property type="evidence" value="ECO:0000318"/>
    <property type="project" value="GO_Central"/>
</dbReference>
<dbReference type="GO" id="GO:0051315">
    <property type="term" value="P:attachment of mitotic spindle microtubules to kinetochore"/>
    <property type="evidence" value="ECO:0000315"/>
    <property type="project" value="SGD"/>
</dbReference>
<dbReference type="GO" id="GO:0045144">
    <property type="term" value="P:meiotic sister chromatid segregation"/>
    <property type="evidence" value="ECO:0000315"/>
    <property type="project" value="SGD"/>
</dbReference>
<dbReference type="GO" id="GO:0034453">
    <property type="term" value="P:microtubule anchoring"/>
    <property type="evidence" value="ECO:0000315"/>
    <property type="project" value="SGD"/>
</dbReference>
<dbReference type="GO" id="GO:0007020">
    <property type="term" value="P:microtubule nucleation"/>
    <property type="evidence" value="ECO:0000314"/>
    <property type="project" value="SGD"/>
</dbReference>
<dbReference type="GO" id="GO:0006312">
    <property type="term" value="P:mitotic recombination"/>
    <property type="evidence" value="ECO:0000315"/>
    <property type="project" value="SGD"/>
</dbReference>
<dbReference type="GO" id="GO:0045931">
    <property type="term" value="P:positive regulation of mitotic cell cycle"/>
    <property type="evidence" value="ECO:0000315"/>
    <property type="project" value="SGD"/>
</dbReference>
<dbReference type="GO" id="GO:0006090">
    <property type="term" value="P:pyruvate metabolic process"/>
    <property type="evidence" value="ECO:0000318"/>
    <property type="project" value="GO_Central"/>
</dbReference>
<dbReference type="Gene3D" id="3.30.390.30">
    <property type="match status" value="1"/>
</dbReference>
<dbReference type="Gene3D" id="3.50.50.60">
    <property type="entry name" value="FAD/NAD(P)-binding domain"/>
    <property type="match status" value="2"/>
</dbReference>
<dbReference type="InterPro" id="IPR050151">
    <property type="entry name" value="Class-I_Pyr_Nuc-Dis_Oxidored"/>
</dbReference>
<dbReference type="InterPro" id="IPR036188">
    <property type="entry name" value="FAD/NAD-bd_sf"/>
</dbReference>
<dbReference type="InterPro" id="IPR023753">
    <property type="entry name" value="FAD/NAD-binding_dom"/>
</dbReference>
<dbReference type="InterPro" id="IPR016156">
    <property type="entry name" value="FAD/NAD-linked_Rdtase_dimer_sf"/>
</dbReference>
<dbReference type="InterPro" id="IPR001100">
    <property type="entry name" value="Pyr_nuc-diS_OxRdtase"/>
</dbReference>
<dbReference type="InterPro" id="IPR004099">
    <property type="entry name" value="Pyr_nucl-diS_OxRdtase_dimer"/>
</dbReference>
<dbReference type="PANTHER" id="PTHR22912:SF151">
    <property type="entry name" value="DIHYDROLIPOYL DEHYDROGENASE, MITOCHONDRIAL"/>
    <property type="match status" value="1"/>
</dbReference>
<dbReference type="PANTHER" id="PTHR22912">
    <property type="entry name" value="DISULFIDE OXIDOREDUCTASE"/>
    <property type="match status" value="1"/>
</dbReference>
<dbReference type="Pfam" id="PF07992">
    <property type="entry name" value="Pyr_redox_2"/>
    <property type="match status" value="1"/>
</dbReference>
<dbReference type="Pfam" id="PF02852">
    <property type="entry name" value="Pyr_redox_dim"/>
    <property type="match status" value="1"/>
</dbReference>
<dbReference type="PIRSF" id="PIRSF000350">
    <property type="entry name" value="Mercury_reductase_MerA"/>
    <property type="match status" value="1"/>
</dbReference>
<dbReference type="PRINTS" id="PR00368">
    <property type="entry name" value="FADPNR"/>
</dbReference>
<dbReference type="PRINTS" id="PR00411">
    <property type="entry name" value="PNDRDTASEI"/>
</dbReference>
<dbReference type="SUPFAM" id="SSF51905">
    <property type="entry name" value="FAD/NAD(P)-binding domain"/>
    <property type="match status" value="2"/>
</dbReference>
<dbReference type="SUPFAM" id="SSF55424">
    <property type="entry name" value="FAD/NAD-linked reductases, dimerisation (C-terminal) domain"/>
    <property type="match status" value="1"/>
</dbReference>
<proteinExistence type="evidence at protein level"/>
<reference key="1">
    <citation type="journal article" date="1997" name="Nature">
        <title>The nucleotide sequence of Saccharomyces cerevisiae chromosome XVI.</title>
        <authorList>
            <person name="Bussey H."/>
            <person name="Storms R.K."/>
            <person name="Ahmed A."/>
            <person name="Albermann K."/>
            <person name="Allen E."/>
            <person name="Ansorge W."/>
            <person name="Araujo R."/>
            <person name="Aparicio A."/>
            <person name="Barrell B.G."/>
            <person name="Badcock K."/>
            <person name="Benes V."/>
            <person name="Botstein D."/>
            <person name="Bowman S."/>
            <person name="Brueckner M."/>
            <person name="Carpenter J."/>
            <person name="Cherry J.M."/>
            <person name="Chung E."/>
            <person name="Churcher C.M."/>
            <person name="Coster F."/>
            <person name="Davis K."/>
            <person name="Davis R.W."/>
            <person name="Dietrich F.S."/>
            <person name="Delius H."/>
            <person name="DiPaolo T."/>
            <person name="Dubois E."/>
            <person name="Duesterhoeft A."/>
            <person name="Duncan M."/>
            <person name="Floeth M."/>
            <person name="Fortin N."/>
            <person name="Friesen J.D."/>
            <person name="Fritz C."/>
            <person name="Goffeau A."/>
            <person name="Hall J."/>
            <person name="Hebling U."/>
            <person name="Heumann K."/>
            <person name="Hilbert H."/>
            <person name="Hillier L.W."/>
            <person name="Hunicke-Smith S."/>
            <person name="Hyman R.W."/>
            <person name="Johnston M."/>
            <person name="Kalman S."/>
            <person name="Kleine K."/>
            <person name="Komp C."/>
            <person name="Kurdi O."/>
            <person name="Lashkari D."/>
            <person name="Lew H."/>
            <person name="Lin A."/>
            <person name="Lin D."/>
            <person name="Louis E.J."/>
            <person name="Marathe R."/>
            <person name="Messenguy F."/>
            <person name="Mewes H.-W."/>
            <person name="Mirtipati S."/>
            <person name="Moestl D."/>
            <person name="Mueller-Auer S."/>
            <person name="Namath A."/>
            <person name="Nentwich U."/>
            <person name="Oefner P."/>
            <person name="Pearson D."/>
            <person name="Petel F.X."/>
            <person name="Pohl T.M."/>
            <person name="Purnelle B."/>
            <person name="Rajandream M.A."/>
            <person name="Rechmann S."/>
            <person name="Rieger M."/>
            <person name="Riles L."/>
            <person name="Roberts D."/>
            <person name="Schaefer M."/>
            <person name="Scharfe M."/>
            <person name="Scherens B."/>
            <person name="Schramm S."/>
            <person name="Schroeder M."/>
            <person name="Sdicu A.-M."/>
            <person name="Tettelin H."/>
            <person name="Urrestarazu L.A."/>
            <person name="Ushinsky S."/>
            <person name="Vierendeels F."/>
            <person name="Vissers S."/>
            <person name="Voss H."/>
            <person name="Walsh S.V."/>
            <person name="Wambutt R."/>
            <person name="Wang Y."/>
            <person name="Wedler E."/>
            <person name="Wedler H."/>
            <person name="Winnett E."/>
            <person name="Zhong W.-W."/>
            <person name="Zollner A."/>
            <person name="Vo D.H."/>
            <person name="Hani J."/>
        </authorList>
    </citation>
    <scope>NUCLEOTIDE SEQUENCE [LARGE SCALE GENOMIC DNA]</scope>
    <source>
        <strain>ATCC 204508 / S288c</strain>
    </source>
</reference>
<reference key="2">
    <citation type="journal article" date="2014" name="G3 (Bethesda)">
        <title>The reference genome sequence of Saccharomyces cerevisiae: Then and now.</title>
        <authorList>
            <person name="Engel S.R."/>
            <person name="Dietrich F.S."/>
            <person name="Fisk D.G."/>
            <person name="Binkley G."/>
            <person name="Balakrishnan R."/>
            <person name="Costanzo M.C."/>
            <person name="Dwight S.S."/>
            <person name="Hitz B.C."/>
            <person name="Karra K."/>
            <person name="Nash R.S."/>
            <person name="Weng S."/>
            <person name="Wong E.D."/>
            <person name="Lloyd P."/>
            <person name="Skrzypek M.S."/>
            <person name="Miyasato S.R."/>
            <person name="Simison M."/>
            <person name="Cherry J.M."/>
        </authorList>
    </citation>
    <scope>GENOME REANNOTATION</scope>
    <source>
        <strain>ATCC 204508 / S288c</strain>
    </source>
</reference>
<reference key="3">
    <citation type="journal article" date="2003" name="Nature">
        <title>Global analysis of protein localization in budding yeast.</title>
        <authorList>
            <person name="Huh W.-K."/>
            <person name="Falvo J.V."/>
            <person name="Gerke L.C."/>
            <person name="Carroll A.S."/>
            <person name="Howson R.W."/>
            <person name="Weissman J.S."/>
            <person name="O'Shea E.K."/>
        </authorList>
    </citation>
    <scope>SUBCELLULAR LOCATION [LARGE SCALE ANALYSIS]</scope>
</reference>
<reference key="4">
    <citation type="journal article" date="2003" name="Nature">
        <title>Global analysis of protein expression in yeast.</title>
        <authorList>
            <person name="Ghaemmaghami S."/>
            <person name="Huh W.-K."/>
            <person name="Bower K."/>
            <person name="Howson R.W."/>
            <person name="Belle A."/>
            <person name="Dephoure N."/>
            <person name="O'Shea E.K."/>
            <person name="Weissman J.S."/>
        </authorList>
    </citation>
    <scope>LEVEL OF PROTEIN EXPRESSION [LARGE SCALE ANALYSIS]</scope>
</reference>
<protein>
    <recommendedName>
        <fullName>Increased recombination centers protein 15</fullName>
    </recommendedName>
</protein>
<accession>Q02733</accession>
<accession>D6W3Z5</accession>
<keyword id="KW-0963">Cytoplasm</keyword>
<keyword id="KW-0274">FAD</keyword>
<keyword id="KW-0285">Flavoprotein</keyword>
<keyword id="KW-0520">NAD</keyword>
<keyword id="KW-1185">Reference proteome</keyword>
<organism>
    <name type="scientific">Saccharomyces cerevisiae (strain ATCC 204508 / S288c)</name>
    <name type="common">Baker's yeast</name>
    <dbReference type="NCBI Taxonomy" id="559292"/>
    <lineage>
        <taxon>Eukaryota</taxon>
        <taxon>Fungi</taxon>
        <taxon>Dikarya</taxon>
        <taxon>Ascomycota</taxon>
        <taxon>Saccharomycotina</taxon>
        <taxon>Saccharomycetes</taxon>
        <taxon>Saccharomycetales</taxon>
        <taxon>Saccharomycetaceae</taxon>
        <taxon>Saccharomyces</taxon>
    </lineage>
</organism>
<sequence>MGGEDEILSTMEDFAAVYDVLVIGCGPGGFTAAMQASQAGLLTACVDQRASLGGAYLVDGAVPSKTLLYESYLYRLLQQQELIEQRGTRLFPAKFDMQAAQSALKHNIEELGNVYKRELSKNNVTVYKGTAAFKDPHHVEIAQRGMKPFIVEAKYIVVATGSAVIQCPGVAIDNDKIISSDKALSLDYIPSRFTIMGGGTIGLEIACIFNNLGSRVTIVESQSEICQNMDNELASATKTLLQCQGIAFLLDTRVQLAEADAAGQLNITLLNKVSKKTYVHHCDVLMVSIGRRPLLKGLDISSIGLDERDFVENVDVQTQSLLKYPHIKPIGDVTLGPMLALKAEEQAIRAIQSIGCTGSDGTSNCGFPPNVLYCQPQIGWVGYTEEGLAKARIPYQKGRVLFSQNVRYNTLLPREENTTVSPFIKVLIDSRDMKILGVHMINDDANELLSQASMAVSLGLTAHDVCKVPFPHPSLSESFKQAVQLAMANGTSPGVHVRE</sequence>
<feature type="chain" id="PRO_0000268179" description="Increased recombination centers protein 15">
    <location>
        <begin position="1"/>
        <end position="499"/>
    </location>
</feature>
<feature type="binding site" evidence="1">
    <location>
        <begin position="47"/>
        <end position="56"/>
    </location>
    <ligand>
        <name>FAD</name>
        <dbReference type="ChEBI" id="CHEBI:57692"/>
    </ligand>
</feature>
<gene>
    <name type="primary">IRC15</name>
    <name type="ordered locus">YPL017C</name>
</gene>
<name>IRC15_YEAST</name>